<accession>B7N554</accession>
<proteinExistence type="inferred from homology"/>
<feature type="chain" id="PRO_1000127348" description="Large ribosomal subunit protein bL35">
    <location>
        <begin position="1"/>
        <end position="65"/>
    </location>
</feature>
<feature type="region of interest" description="Disordered" evidence="2">
    <location>
        <begin position="1"/>
        <end position="22"/>
    </location>
</feature>
<feature type="compositionally biased region" description="Basic residues" evidence="2">
    <location>
        <begin position="10"/>
        <end position="22"/>
    </location>
</feature>
<protein>
    <recommendedName>
        <fullName evidence="1">Large ribosomal subunit protein bL35</fullName>
    </recommendedName>
    <alternativeName>
        <fullName evidence="3">50S ribosomal protein L35</fullName>
    </alternativeName>
</protein>
<comment type="similarity">
    <text evidence="1">Belongs to the bacterial ribosomal protein bL35 family.</text>
</comment>
<name>RL35_ECOLU</name>
<reference key="1">
    <citation type="journal article" date="2009" name="PLoS Genet.">
        <title>Organised genome dynamics in the Escherichia coli species results in highly diverse adaptive paths.</title>
        <authorList>
            <person name="Touchon M."/>
            <person name="Hoede C."/>
            <person name="Tenaillon O."/>
            <person name="Barbe V."/>
            <person name="Baeriswyl S."/>
            <person name="Bidet P."/>
            <person name="Bingen E."/>
            <person name="Bonacorsi S."/>
            <person name="Bouchier C."/>
            <person name="Bouvet O."/>
            <person name="Calteau A."/>
            <person name="Chiapello H."/>
            <person name="Clermont O."/>
            <person name="Cruveiller S."/>
            <person name="Danchin A."/>
            <person name="Diard M."/>
            <person name="Dossat C."/>
            <person name="Karoui M.E."/>
            <person name="Frapy E."/>
            <person name="Garry L."/>
            <person name="Ghigo J.M."/>
            <person name="Gilles A.M."/>
            <person name="Johnson J."/>
            <person name="Le Bouguenec C."/>
            <person name="Lescat M."/>
            <person name="Mangenot S."/>
            <person name="Martinez-Jehanne V."/>
            <person name="Matic I."/>
            <person name="Nassif X."/>
            <person name="Oztas S."/>
            <person name="Petit M.A."/>
            <person name="Pichon C."/>
            <person name="Rouy Z."/>
            <person name="Ruf C.S."/>
            <person name="Schneider D."/>
            <person name="Tourret J."/>
            <person name="Vacherie B."/>
            <person name="Vallenet D."/>
            <person name="Medigue C."/>
            <person name="Rocha E.P.C."/>
            <person name="Denamur E."/>
        </authorList>
    </citation>
    <scope>NUCLEOTIDE SEQUENCE [LARGE SCALE GENOMIC DNA]</scope>
    <source>
        <strain>UMN026 / ExPEC</strain>
    </source>
</reference>
<dbReference type="EMBL" id="CU928163">
    <property type="protein sequence ID" value="CAR13203.1"/>
    <property type="molecule type" value="Genomic_DNA"/>
</dbReference>
<dbReference type="RefSeq" id="WP_001124225.1">
    <property type="nucleotide sequence ID" value="NC_011751.1"/>
</dbReference>
<dbReference type="RefSeq" id="YP_002412736.1">
    <property type="nucleotide sequence ID" value="NC_011751.1"/>
</dbReference>
<dbReference type="SMR" id="B7N554"/>
<dbReference type="STRING" id="585056.ECUMN_2007"/>
<dbReference type="GeneID" id="97601348"/>
<dbReference type="KEGG" id="eum:ECUMN_2007"/>
<dbReference type="PATRIC" id="fig|585056.7.peg.2192"/>
<dbReference type="HOGENOM" id="CLU_169643_1_1_6"/>
<dbReference type="PRO" id="PR:B7N554"/>
<dbReference type="Proteomes" id="UP000007097">
    <property type="component" value="Chromosome"/>
</dbReference>
<dbReference type="GO" id="GO:0022625">
    <property type="term" value="C:cytosolic large ribosomal subunit"/>
    <property type="evidence" value="ECO:0007669"/>
    <property type="project" value="TreeGrafter"/>
</dbReference>
<dbReference type="GO" id="GO:0003735">
    <property type="term" value="F:structural constituent of ribosome"/>
    <property type="evidence" value="ECO:0007669"/>
    <property type="project" value="InterPro"/>
</dbReference>
<dbReference type="GO" id="GO:0006412">
    <property type="term" value="P:translation"/>
    <property type="evidence" value="ECO:0007669"/>
    <property type="project" value="UniProtKB-UniRule"/>
</dbReference>
<dbReference type="FunFam" id="4.10.410.60:FF:000001">
    <property type="entry name" value="50S ribosomal protein L35"/>
    <property type="match status" value="1"/>
</dbReference>
<dbReference type="Gene3D" id="4.10.410.60">
    <property type="match status" value="1"/>
</dbReference>
<dbReference type="HAMAP" id="MF_00514">
    <property type="entry name" value="Ribosomal_bL35"/>
    <property type="match status" value="1"/>
</dbReference>
<dbReference type="InterPro" id="IPR001706">
    <property type="entry name" value="Ribosomal_bL35"/>
</dbReference>
<dbReference type="InterPro" id="IPR021137">
    <property type="entry name" value="Ribosomal_bL35-like"/>
</dbReference>
<dbReference type="InterPro" id="IPR018265">
    <property type="entry name" value="Ribosomal_bL35_CS"/>
</dbReference>
<dbReference type="InterPro" id="IPR037229">
    <property type="entry name" value="Ribosomal_bL35_sf"/>
</dbReference>
<dbReference type="NCBIfam" id="TIGR00001">
    <property type="entry name" value="rpmI_bact"/>
    <property type="match status" value="1"/>
</dbReference>
<dbReference type="PANTHER" id="PTHR33343">
    <property type="entry name" value="54S RIBOSOMAL PROTEIN BL35M"/>
    <property type="match status" value="1"/>
</dbReference>
<dbReference type="PANTHER" id="PTHR33343:SF1">
    <property type="entry name" value="LARGE RIBOSOMAL SUBUNIT PROTEIN BL35M"/>
    <property type="match status" value="1"/>
</dbReference>
<dbReference type="Pfam" id="PF01632">
    <property type="entry name" value="Ribosomal_L35p"/>
    <property type="match status" value="1"/>
</dbReference>
<dbReference type="PRINTS" id="PR00064">
    <property type="entry name" value="RIBOSOMALL35"/>
</dbReference>
<dbReference type="SUPFAM" id="SSF143034">
    <property type="entry name" value="L35p-like"/>
    <property type="match status" value="1"/>
</dbReference>
<dbReference type="PROSITE" id="PS00936">
    <property type="entry name" value="RIBOSOMAL_L35"/>
    <property type="match status" value="1"/>
</dbReference>
<keyword id="KW-0687">Ribonucleoprotein</keyword>
<keyword id="KW-0689">Ribosomal protein</keyword>
<organism>
    <name type="scientific">Escherichia coli O17:K52:H18 (strain UMN026 / ExPEC)</name>
    <dbReference type="NCBI Taxonomy" id="585056"/>
    <lineage>
        <taxon>Bacteria</taxon>
        <taxon>Pseudomonadati</taxon>
        <taxon>Pseudomonadota</taxon>
        <taxon>Gammaproteobacteria</taxon>
        <taxon>Enterobacterales</taxon>
        <taxon>Enterobacteriaceae</taxon>
        <taxon>Escherichia</taxon>
    </lineage>
</organism>
<gene>
    <name evidence="1" type="primary">rpmI</name>
    <name type="ordered locus">ECUMN_2007</name>
</gene>
<evidence type="ECO:0000255" key="1">
    <source>
        <dbReference type="HAMAP-Rule" id="MF_00514"/>
    </source>
</evidence>
<evidence type="ECO:0000256" key="2">
    <source>
        <dbReference type="SAM" id="MobiDB-lite"/>
    </source>
</evidence>
<evidence type="ECO:0000305" key="3"/>
<sequence length="65" mass="7289">MPKIKTVRGAAKRFKKTGKGGFKHKHANLRHILTKKATKRKRHLRPKAMVSKGDLGLVIACLPYA</sequence>